<comment type="function">
    <text evidence="1">Catalyzes the transfer of the enolpyruvyl moiety of phosphoenolpyruvate (PEP) to the 5-hydroxyl of shikimate-3-phosphate (S3P) to produce enolpyruvyl shikimate-3-phosphate and inorganic phosphate.</text>
</comment>
<comment type="catalytic activity">
    <reaction evidence="1">
        <text>3-phosphoshikimate + phosphoenolpyruvate = 5-O-(1-carboxyvinyl)-3-phosphoshikimate + phosphate</text>
        <dbReference type="Rhea" id="RHEA:21256"/>
        <dbReference type="ChEBI" id="CHEBI:43474"/>
        <dbReference type="ChEBI" id="CHEBI:57701"/>
        <dbReference type="ChEBI" id="CHEBI:58702"/>
        <dbReference type="ChEBI" id="CHEBI:145989"/>
        <dbReference type="EC" id="2.5.1.19"/>
    </reaction>
    <physiologicalReaction direction="left-to-right" evidence="1">
        <dbReference type="Rhea" id="RHEA:21257"/>
    </physiologicalReaction>
</comment>
<comment type="pathway">
    <text evidence="1">Metabolic intermediate biosynthesis; chorismate biosynthesis; chorismate from D-erythrose 4-phosphate and phosphoenolpyruvate: step 6/7.</text>
</comment>
<comment type="subunit">
    <text evidence="1">Monomer.</text>
</comment>
<comment type="subcellular location">
    <subcellularLocation>
        <location evidence="1">Cytoplasm</location>
    </subcellularLocation>
</comment>
<comment type="similarity">
    <text evidence="1">Belongs to the EPSP synthase family.</text>
</comment>
<protein>
    <recommendedName>
        <fullName evidence="1">3-phosphoshikimate 1-carboxyvinyltransferase</fullName>
        <ecNumber evidence="1">2.5.1.19</ecNumber>
    </recommendedName>
    <alternativeName>
        <fullName evidence="1">5-enolpyruvylshikimate-3-phosphate synthase</fullName>
        <shortName evidence="1">EPSP synthase</shortName>
        <shortName evidence="1">EPSPS</shortName>
    </alternativeName>
</protein>
<name>AROA_MYCTA</name>
<sequence>MKTWPAPTAPTPVRATVTVPGSKSQTNRALVLAALAAAQGRGASTISGALRSRDTELMLDALQTLGLRVDGVGSELTVSGRIEPGPGARVDCGLAGTVLRFVPPLAALGSVPVTFDGDQQARGRPIAPLLDALRELGVAVDGTGLPFRVRGNGSLAGGTVAIDASASSQFVSGLLLSAASFTDGLTVQHTGSSLPSAPHIAMTAAMLRQAGVDIDDSTPNRWQVRPGPVAARRWDIEPDLTNAVAFLSAAVVSGGTVRITGWPRVSVQPADHILAILRQLNAVVIHADSSLEVRGPTGYDGFDVDLRAVGELTPSVAALAALASPGSVSRLSGIAHLRGHETDRLAALSTEINRLGGTCRETPDGLVITATPLRPGIWRAYADHRMAMAGAIIGLRVAGVEVDDIAATTKTLPEFPRLWAEMVGPGQGWGYPQPRSGQRARRATGQGSGG</sequence>
<organism>
    <name type="scientific">Mycobacterium tuberculosis (strain ATCC 25177 / H37Ra)</name>
    <dbReference type="NCBI Taxonomy" id="419947"/>
    <lineage>
        <taxon>Bacteria</taxon>
        <taxon>Bacillati</taxon>
        <taxon>Actinomycetota</taxon>
        <taxon>Actinomycetes</taxon>
        <taxon>Mycobacteriales</taxon>
        <taxon>Mycobacteriaceae</taxon>
        <taxon>Mycobacterium</taxon>
        <taxon>Mycobacterium tuberculosis complex</taxon>
    </lineage>
</organism>
<reference key="1">
    <citation type="journal article" date="2008" name="PLoS ONE">
        <title>Genetic basis of virulence attenuation revealed by comparative genomic analysis of Mycobacterium tuberculosis strain H37Ra versus H37Rv.</title>
        <authorList>
            <person name="Zheng H."/>
            <person name="Lu L."/>
            <person name="Wang B."/>
            <person name="Pu S."/>
            <person name="Zhang X."/>
            <person name="Zhu G."/>
            <person name="Shi W."/>
            <person name="Zhang L."/>
            <person name="Wang H."/>
            <person name="Wang S."/>
            <person name="Zhao G."/>
            <person name="Zhang Y."/>
        </authorList>
    </citation>
    <scope>NUCLEOTIDE SEQUENCE [LARGE SCALE GENOMIC DNA]</scope>
    <source>
        <strain>ATCC 25177 / H37Ra</strain>
    </source>
</reference>
<gene>
    <name evidence="1" type="primary">aroA</name>
    <name type="ordered locus">MRA_3268</name>
</gene>
<accession>A5U7Q1</accession>
<proteinExistence type="inferred from homology"/>
<dbReference type="EC" id="2.5.1.19" evidence="1"/>
<dbReference type="EMBL" id="CP000611">
    <property type="protein sequence ID" value="ABQ75051.1"/>
    <property type="molecule type" value="Genomic_DNA"/>
</dbReference>
<dbReference type="RefSeq" id="WP_003416914.1">
    <property type="nucleotide sequence ID" value="NZ_CP016972.1"/>
</dbReference>
<dbReference type="SMR" id="A5U7Q1"/>
<dbReference type="KEGG" id="mra:MRA_3268"/>
<dbReference type="eggNOG" id="COG0128">
    <property type="taxonomic scope" value="Bacteria"/>
</dbReference>
<dbReference type="HOGENOM" id="CLU_024321_0_0_11"/>
<dbReference type="UniPathway" id="UPA00053">
    <property type="reaction ID" value="UER00089"/>
</dbReference>
<dbReference type="Proteomes" id="UP000001988">
    <property type="component" value="Chromosome"/>
</dbReference>
<dbReference type="GO" id="GO:0005737">
    <property type="term" value="C:cytoplasm"/>
    <property type="evidence" value="ECO:0007669"/>
    <property type="project" value="UniProtKB-SubCell"/>
</dbReference>
<dbReference type="GO" id="GO:0003866">
    <property type="term" value="F:3-phosphoshikimate 1-carboxyvinyltransferase activity"/>
    <property type="evidence" value="ECO:0007669"/>
    <property type="project" value="UniProtKB-UniRule"/>
</dbReference>
<dbReference type="GO" id="GO:0008652">
    <property type="term" value="P:amino acid biosynthetic process"/>
    <property type="evidence" value="ECO:0007669"/>
    <property type="project" value="UniProtKB-KW"/>
</dbReference>
<dbReference type="GO" id="GO:0009073">
    <property type="term" value="P:aromatic amino acid family biosynthetic process"/>
    <property type="evidence" value="ECO:0007669"/>
    <property type="project" value="UniProtKB-KW"/>
</dbReference>
<dbReference type="GO" id="GO:0009423">
    <property type="term" value="P:chorismate biosynthetic process"/>
    <property type="evidence" value="ECO:0007669"/>
    <property type="project" value="UniProtKB-UniRule"/>
</dbReference>
<dbReference type="CDD" id="cd01556">
    <property type="entry name" value="EPSP_synthase"/>
    <property type="match status" value="1"/>
</dbReference>
<dbReference type="FunFam" id="3.65.10.10:FF:000010">
    <property type="entry name" value="3-phosphoshikimate 1-carboxyvinyltransferase"/>
    <property type="match status" value="1"/>
</dbReference>
<dbReference type="FunFam" id="3.65.10.10:FF:000011">
    <property type="entry name" value="3-phosphoshikimate 1-carboxyvinyltransferase"/>
    <property type="match status" value="1"/>
</dbReference>
<dbReference type="Gene3D" id="3.65.10.10">
    <property type="entry name" value="Enolpyruvate transferase domain"/>
    <property type="match status" value="2"/>
</dbReference>
<dbReference type="HAMAP" id="MF_00210">
    <property type="entry name" value="EPSP_synth"/>
    <property type="match status" value="1"/>
</dbReference>
<dbReference type="InterPro" id="IPR001986">
    <property type="entry name" value="Enolpyruvate_Tfrase_dom"/>
</dbReference>
<dbReference type="InterPro" id="IPR036968">
    <property type="entry name" value="Enolpyruvate_Tfrase_sf"/>
</dbReference>
<dbReference type="InterPro" id="IPR006264">
    <property type="entry name" value="EPSP_synthase"/>
</dbReference>
<dbReference type="InterPro" id="IPR023193">
    <property type="entry name" value="EPSP_synthase_CS"/>
</dbReference>
<dbReference type="InterPro" id="IPR013792">
    <property type="entry name" value="RNA3'P_cycl/enolpyr_Trfase_a/b"/>
</dbReference>
<dbReference type="NCBIfam" id="TIGR01356">
    <property type="entry name" value="aroA"/>
    <property type="match status" value="1"/>
</dbReference>
<dbReference type="PANTHER" id="PTHR21090">
    <property type="entry name" value="AROM/DEHYDROQUINATE SYNTHASE"/>
    <property type="match status" value="1"/>
</dbReference>
<dbReference type="PANTHER" id="PTHR21090:SF5">
    <property type="entry name" value="PENTAFUNCTIONAL AROM POLYPEPTIDE"/>
    <property type="match status" value="1"/>
</dbReference>
<dbReference type="Pfam" id="PF00275">
    <property type="entry name" value="EPSP_synthase"/>
    <property type="match status" value="1"/>
</dbReference>
<dbReference type="PIRSF" id="PIRSF000505">
    <property type="entry name" value="EPSPS"/>
    <property type="match status" value="1"/>
</dbReference>
<dbReference type="SUPFAM" id="SSF55205">
    <property type="entry name" value="EPT/RTPC-like"/>
    <property type="match status" value="1"/>
</dbReference>
<dbReference type="PROSITE" id="PS00104">
    <property type="entry name" value="EPSP_SYNTHASE_1"/>
    <property type="match status" value="1"/>
</dbReference>
<dbReference type="PROSITE" id="PS00885">
    <property type="entry name" value="EPSP_SYNTHASE_2"/>
    <property type="match status" value="1"/>
</dbReference>
<evidence type="ECO:0000255" key="1">
    <source>
        <dbReference type="HAMAP-Rule" id="MF_00210"/>
    </source>
</evidence>
<evidence type="ECO:0000256" key="2">
    <source>
        <dbReference type="SAM" id="MobiDB-lite"/>
    </source>
</evidence>
<keyword id="KW-0028">Amino-acid biosynthesis</keyword>
<keyword id="KW-0057">Aromatic amino acid biosynthesis</keyword>
<keyword id="KW-0963">Cytoplasm</keyword>
<keyword id="KW-1185">Reference proteome</keyword>
<keyword id="KW-0808">Transferase</keyword>
<feature type="chain" id="PRO_1000012453" description="3-phosphoshikimate 1-carboxyvinyltransferase">
    <location>
        <begin position="1"/>
        <end position="450"/>
    </location>
</feature>
<feature type="region of interest" description="Disordered" evidence="2">
    <location>
        <begin position="426"/>
        <end position="450"/>
    </location>
</feature>
<feature type="active site" description="Proton acceptor" evidence="1">
    <location>
        <position position="311"/>
    </location>
</feature>
<feature type="binding site" evidence="1">
    <location>
        <position position="23"/>
    </location>
    <ligand>
        <name>3-phosphoshikimate</name>
        <dbReference type="ChEBI" id="CHEBI:145989"/>
    </ligand>
</feature>
<feature type="binding site" evidence="1">
    <location>
        <position position="23"/>
    </location>
    <ligand>
        <name>phosphoenolpyruvate</name>
        <dbReference type="ChEBI" id="CHEBI:58702"/>
    </ligand>
</feature>
<feature type="binding site" evidence="1">
    <location>
        <position position="24"/>
    </location>
    <ligand>
        <name>3-phosphoshikimate</name>
        <dbReference type="ChEBI" id="CHEBI:145989"/>
    </ligand>
</feature>
<feature type="binding site" evidence="1">
    <location>
        <position position="28"/>
    </location>
    <ligand>
        <name>3-phosphoshikimate</name>
        <dbReference type="ChEBI" id="CHEBI:145989"/>
    </ligand>
</feature>
<feature type="binding site" evidence="1">
    <location>
        <position position="96"/>
    </location>
    <ligand>
        <name>phosphoenolpyruvate</name>
        <dbReference type="ChEBI" id="CHEBI:58702"/>
    </ligand>
</feature>
<feature type="binding site" evidence="1">
    <location>
        <position position="124"/>
    </location>
    <ligand>
        <name>phosphoenolpyruvate</name>
        <dbReference type="ChEBI" id="CHEBI:58702"/>
    </ligand>
</feature>
<feature type="binding site" evidence="1">
    <location>
        <position position="167"/>
    </location>
    <ligand>
        <name>3-phosphoshikimate</name>
        <dbReference type="ChEBI" id="CHEBI:145989"/>
    </ligand>
</feature>
<feature type="binding site" evidence="1">
    <location>
        <position position="168"/>
    </location>
    <ligand>
        <name>3-phosphoshikimate</name>
        <dbReference type="ChEBI" id="CHEBI:145989"/>
    </ligand>
</feature>
<feature type="binding site" evidence="1">
    <location>
        <position position="169"/>
    </location>
    <ligand>
        <name>3-phosphoshikimate</name>
        <dbReference type="ChEBI" id="CHEBI:145989"/>
    </ligand>
</feature>
<feature type="binding site" evidence="1">
    <location>
        <position position="169"/>
    </location>
    <ligand>
        <name>phosphoenolpyruvate</name>
        <dbReference type="ChEBI" id="CHEBI:58702"/>
    </ligand>
</feature>
<feature type="binding site" evidence="1">
    <location>
        <position position="196"/>
    </location>
    <ligand>
        <name>3-phosphoshikimate</name>
        <dbReference type="ChEBI" id="CHEBI:145989"/>
    </ligand>
</feature>
<feature type="binding site" evidence="1">
    <location>
        <position position="311"/>
    </location>
    <ligand>
        <name>3-phosphoshikimate</name>
        <dbReference type="ChEBI" id="CHEBI:145989"/>
    </ligand>
</feature>
<feature type="binding site" evidence="1">
    <location>
        <position position="340"/>
    </location>
    <ligand>
        <name>3-phosphoshikimate</name>
        <dbReference type="ChEBI" id="CHEBI:145989"/>
    </ligand>
</feature>
<feature type="binding site" evidence="1">
    <location>
        <position position="344"/>
    </location>
    <ligand>
        <name>phosphoenolpyruvate</name>
        <dbReference type="ChEBI" id="CHEBI:58702"/>
    </ligand>
</feature>
<feature type="binding site" evidence="1">
    <location>
        <position position="385"/>
    </location>
    <ligand>
        <name>phosphoenolpyruvate</name>
        <dbReference type="ChEBI" id="CHEBI:58702"/>
    </ligand>
</feature>
<feature type="binding site" evidence="1">
    <location>
        <position position="410"/>
    </location>
    <ligand>
        <name>phosphoenolpyruvate</name>
        <dbReference type="ChEBI" id="CHEBI:58702"/>
    </ligand>
</feature>